<feature type="chain" id="PRO_1000099146" description="GTPase Der">
    <location>
        <begin position="1"/>
        <end position="437"/>
    </location>
</feature>
<feature type="domain" description="EngA-type G 1">
    <location>
        <begin position="3"/>
        <end position="168"/>
    </location>
</feature>
<feature type="domain" description="EngA-type G 2">
    <location>
        <begin position="178"/>
        <end position="353"/>
    </location>
</feature>
<feature type="domain" description="KH-like" evidence="1">
    <location>
        <begin position="354"/>
        <end position="437"/>
    </location>
</feature>
<feature type="binding site" evidence="1">
    <location>
        <begin position="9"/>
        <end position="16"/>
    </location>
    <ligand>
        <name>GTP</name>
        <dbReference type="ChEBI" id="CHEBI:37565"/>
        <label>1</label>
    </ligand>
</feature>
<feature type="binding site" evidence="1">
    <location>
        <begin position="56"/>
        <end position="60"/>
    </location>
    <ligand>
        <name>GTP</name>
        <dbReference type="ChEBI" id="CHEBI:37565"/>
        <label>1</label>
    </ligand>
</feature>
<feature type="binding site" evidence="1">
    <location>
        <begin position="120"/>
        <end position="123"/>
    </location>
    <ligand>
        <name>GTP</name>
        <dbReference type="ChEBI" id="CHEBI:37565"/>
        <label>1</label>
    </ligand>
</feature>
<feature type="binding site" evidence="1">
    <location>
        <begin position="184"/>
        <end position="191"/>
    </location>
    <ligand>
        <name>GTP</name>
        <dbReference type="ChEBI" id="CHEBI:37565"/>
        <label>2</label>
    </ligand>
</feature>
<feature type="binding site" evidence="1">
    <location>
        <begin position="231"/>
        <end position="235"/>
    </location>
    <ligand>
        <name>GTP</name>
        <dbReference type="ChEBI" id="CHEBI:37565"/>
        <label>2</label>
    </ligand>
</feature>
<feature type="binding site" evidence="1">
    <location>
        <begin position="296"/>
        <end position="299"/>
    </location>
    <ligand>
        <name>GTP</name>
        <dbReference type="ChEBI" id="CHEBI:37565"/>
        <label>2</label>
    </ligand>
</feature>
<sequence length="437" mass="49304">MKPLIALVGRPNVGKSTLFNRILRQRSAIVDPTPGVTRDRHIAEGEWQGKQFLLMDTGGYNADGDTISMAMLEQTLMAIRDADIVIFLTDVRAGLSYEDLELGRLLQRTFQHKQLFFVVNKVETPQLSLDAESFIKTGFTAPYFISARDGSGVADMLDDILESLPETEKQLQEKESAIQLAVVGRPNVGKSSFVNSLLGSNRLIVSNIPGTTRDAIDSRFIRKQQEFILIDTAGLRKRTKIDAGIEYYSSLRTEKAIERCDVALVMLDAAPGIEKQDMKIINMAVERKKGALLLINKWDLIEKDSKTSKIYEETLRSNMGNLSYVPVLFISALTKKNLYRAIDTAQQISQNRSRKISTSVLNKFLEEALSHTHPSTKSGKELKIKYMTQINAAWPVFAFFCNDPLLVQANFRKFLENKLREHFSLEGVPISMRFMQK</sequence>
<keyword id="KW-0342">GTP-binding</keyword>
<keyword id="KW-0547">Nucleotide-binding</keyword>
<keyword id="KW-1185">Reference proteome</keyword>
<keyword id="KW-0677">Repeat</keyword>
<keyword id="KW-0690">Ribosome biogenesis</keyword>
<comment type="function">
    <text evidence="1">GTPase that plays an essential role in the late steps of ribosome biogenesis.</text>
</comment>
<comment type="subunit">
    <text evidence="1">Associates with the 50S ribosomal subunit.</text>
</comment>
<comment type="similarity">
    <text evidence="1">Belongs to the TRAFAC class TrmE-Era-EngA-EngB-Septin-like GTPase superfamily. EngA (Der) GTPase family.</text>
</comment>
<name>DER_PELPB</name>
<gene>
    <name evidence="1" type="primary">der</name>
    <name type="synonym">engA</name>
    <name type="ordered locus">Ppha_2356</name>
</gene>
<evidence type="ECO:0000255" key="1">
    <source>
        <dbReference type="HAMAP-Rule" id="MF_00195"/>
    </source>
</evidence>
<organism>
    <name type="scientific">Pelodictyon phaeoclathratiforme (strain DSM 5477 / BU-1)</name>
    <dbReference type="NCBI Taxonomy" id="324925"/>
    <lineage>
        <taxon>Bacteria</taxon>
        <taxon>Pseudomonadati</taxon>
        <taxon>Chlorobiota</taxon>
        <taxon>Chlorobiia</taxon>
        <taxon>Chlorobiales</taxon>
        <taxon>Chlorobiaceae</taxon>
        <taxon>Chlorobium/Pelodictyon group</taxon>
        <taxon>Pelodictyon</taxon>
    </lineage>
</organism>
<accession>B4SED0</accession>
<protein>
    <recommendedName>
        <fullName evidence="1">GTPase Der</fullName>
    </recommendedName>
    <alternativeName>
        <fullName evidence="1">GTP-binding protein EngA</fullName>
    </alternativeName>
</protein>
<reference key="1">
    <citation type="submission" date="2008-06" db="EMBL/GenBank/DDBJ databases">
        <title>Complete sequence of Pelodictyon phaeoclathratiforme BU-1.</title>
        <authorList>
            <consortium name="US DOE Joint Genome Institute"/>
            <person name="Lucas S."/>
            <person name="Copeland A."/>
            <person name="Lapidus A."/>
            <person name="Glavina del Rio T."/>
            <person name="Dalin E."/>
            <person name="Tice H."/>
            <person name="Bruce D."/>
            <person name="Goodwin L."/>
            <person name="Pitluck S."/>
            <person name="Schmutz J."/>
            <person name="Larimer F."/>
            <person name="Land M."/>
            <person name="Hauser L."/>
            <person name="Kyrpides N."/>
            <person name="Mikhailova N."/>
            <person name="Liu Z."/>
            <person name="Li T."/>
            <person name="Zhao F."/>
            <person name="Overmann J."/>
            <person name="Bryant D.A."/>
            <person name="Richardson P."/>
        </authorList>
    </citation>
    <scope>NUCLEOTIDE SEQUENCE [LARGE SCALE GENOMIC DNA]</scope>
    <source>
        <strain>DSM 5477 / BU-1</strain>
    </source>
</reference>
<proteinExistence type="inferred from homology"/>
<dbReference type="EMBL" id="CP001110">
    <property type="protein sequence ID" value="ACF44549.1"/>
    <property type="molecule type" value="Genomic_DNA"/>
</dbReference>
<dbReference type="RefSeq" id="WP_012509023.1">
    <property type="nucleotide sequence ID" value="NC_011060.1"/>
</dbReference>
<dbReference type="SMR" id="B4SED0"/>
<dbReference type="STRING" id="324925.Ppha_2356"/>
<dbReference type="KEGG" id="pph:Ppha_2356"/>
<dbReference type="eggNOG" id="COG1160">
    <property type="taxonomic scope" value="Bacteria"/>
</dbReference>
<dbReference type="HOGENOM" id="CLU_016077_6_2_10"/>
<dbReference type="OrthoDB" id="9805918at2"/>
<dbReference type="Proteomes" id="UP000002724">
    <property type="component" value="Chromosome"/>
</dbReference>
<dbReference type="GO" id="GO:0005525">
    <property type="term" value="F:GTP binding"/>
    <property type="evidence" value="ECO:0007669"/>
    <property type="project" value="UniProtKB-UniRule"/>
</dbReference>
<dbReference type="GO" id="GO:0043022">
    <property type="term" value="F:ribosome binding"/>
    <property type="evidence" value="ECO:0007669"/>
    <property type="project" value="TreeGrafter"/>
</dbReference>
<dbReference type="GO" id="GO:0042254">
    <property type="term" value="P:ribosome biogenesis"/>
    <property type="evidence" value="ECO:0007669"/>
    <property type="project" value="UniProtKB-KW"/>
</dbReference>
<dbReference type="CDD" id="cd01894">
    <property type="entry name" value="EngA1"/>
    <property type="match status" value="1"/>
</dbReference>
<dbReference type="CDD" id="cd01895">
    <property type="entry name" value="EngA2"/>
    <property type="match status" value="1"/>
</dbReference>
<dbReference type="FunFam" id="3.30.300.20:FF:000004">
    <property type="entry name" value="GTPase Der"/>
    <property type="match status" value="1"/>
</dbReference>
<dbReference type="FunFam" id="3.40.50.300:FF:000040">
    <property type="entry name" value="GTPase Der"/>
    <property type="match status" value="1"/>
</dbReference>
<dbReference type="Gene3D" id="3.30.300.20">
    <property type="match status" value="1"/>
</dbReference>
<dbReference type="Gene3D" id="3.40.50.300">
    <property type="entry name" value="P-loop containing nucleotide triphosphate hydrolases"/>
    <property type="match status" value="2"/>
</dbReference>
<dbReference type="HAMAP" id="MF_00195">
    <property type="entry name" value="GTPase_Der"/>
    <property type="match status" value="1"/>
</dbReference>
<dbReference type="InterPro" id="IPR031166">
    <property type="entry name" value="G_ENGA"/>
</dbReference>
<dbReference type="InterPro" id="IPR006073">
    <property type="entry name" value="GTP-bd"/>
</dbReference>
<dbReference type="InterPro" id="IPR016484">
    <property type="entry name" value="GTPase_Der"/>
</dbReference>
<dbReference type="InterPro" id="IPR032859">
    <property type="entry name" value="KH_dom-like"/>
</dbReference>
<dbReference type="InterPro" id="IPR015946">
    <property type="entry name" value="KH_dom-like_a/b"/>
</dbReference>
<dbReference type="InterPro" id="IPR027417">
    <property type="entry name" value="P-loop_NTPase"/>
</dbReference>
<dbReference type="InterPro" id="IPR005225">
    <property type="entry name" value="Small_GTP-bd"/>
</dbReference>
<dbReference type="NCBIfam" id="TIGR03594">
    <property type="entry name" value="GTPase_EngA"/>
    <property type="match status" value="1"/>
</dbReference>
<dbReference type="NCBIfam" id="TIGR00231">
    <property type="entry name" value="small_GTP"/>
    <property type="match status" value="2"/>
</dbReference>
<dbReference type="PANTHER" id="PTHR43834">
    <property type="entry name" value="GTPASE DER"/>
    <property type="match status" value="1"/>
</dbReference>
<dbReference type="PANTHER" id="PTHR43834:SF6">
    <property type="entry name" value="GTPASE DER"/>
    <property type="match status" value="1"/>
</dbReference>
<dbReference type="Pfam" id="PF14714">
    <property type="entry name" value="KH_dom-like"/>
    <property type="match status" value="1"/>
</dbReference>
<dbReference type="Pfam" id="PF01926">
    <property type="entry name" value="MMR_HSR1"/>
    <property type="match status" value="2"/>
</dbReference>
<dbReference type="PIRSF" id="PIRSF006485">
    <property type="entry name" value="GTP-binding_EngA"/>
    <property type="match status" value="1"/>
</dbReference>
<dbReference type="PRINTS" id="PR00326">
    <property type="entry name" value="GTP1OBG"/>
</dbReference>
<dbReference type="SUPFAM" id="SSF52540">
    <property type="entry name" value="P-loop containing nucleoside triphosphate hydrolases"/>
    <property type="match status" value="2"/>
</dbReference>
<dbReference type="PROSITE" id="PS51712">
    <property type="entry name" value="G_ENGA"/>
    <property type="match status" value="2"/>
</dbReference>